<keyword id="KW-0489">Methyltransferase</keyword>
<keyword id="KW-0949">S-adenosyl-L-methionine</keyword>
<keyword id="KW-0808">Transferase</keyword>
<keyword id="KW-0819">tRNA processing</keyword>
<dbReference type="EC" id="2.1.1.-" evidence="1"/>
<dbReference type="EC" id="2.1.1.35" evidence="1"/>
<dbReference type="EMBL" id="CP001233">
    <property type="protein sequence ID" value="ACP04489.1"/>
    <property type="molecule type" value="Genomic_DNA"/>
</dbReference>
<dbReference type="RefSeq" id="WP_000212218.1">
    <property type="nucleotide sequence ID" value="NC_012578.1"/>
</dbReference>
<dbReference type="SMR" id="C3LPZ5"/>
<dbReference type="KEGG" id="vcm:VCM66_0154"/>
<dbReference type="HOGENOM" id="CLU_043022_0_0_6"/>
<dbReference type="Proteomes" id="UP000001217">
    <property type="component" value="Chromosome I"/>
</dbReference>
<dbReference type="GO" id="GO:0005829">
    <property type="term" value="C:cytosol"/>
    <property type="evidence" value="ECO:0007669"/>
    <property type="project" value="TreeGrafter"/>
</dbReference>
<dbReference type="GO" id="GO:0019843">
    <property type="term" value="F:rRNA binding"/>
    <property type="evidence" value="ECO:0007669"/>
    <property type="project" value="TreeGrafter"/>
</dbReference>
<dbReference type="GO" id="GO:0030697">
    <property type="term" value="F:tRNA (uracil(54)-C5)-methyltransferase activity, S-adenosyl methionine-dependent"/>
    <property type="evidence" value="ECO:0007669"/>
    <property type="project" value="UniProtKB-UniRule"/>
</dbReference>
<dbReference type="GO" id="GO:0000049">
    <property type="term" value="F:tRNA binding"/>
    <property type="evidence" value="ECO:0007669"/>
    <property type="project" value="TreeGrafter"/>
</dbReference>
<dbReference type="GO" id="GO:0030488">
    <property type="term" value="P:tRNA methylation"/>
    <property type="evidence" value="ECO:0007669"/>
    <property type="project" value="UniProtKB-UniRule"/>
</dbReference>
<dbReference type="CDD" id="cd02440">
    <property type="entry name" value="AdoMet_MTases"/>
    <property type="match status" value="1"/>
</dbReference>
<dbReference type="FunFam" id="2.40.50.1070:FF:000001">
    <property type="entry name" value="tRNA/tmRNA (uracil-C(5))-methyltransferase"/>
    <property type="match status" value="1"/>
</dbReference>
<dbReference type="FunFam" id="3.40.50.150:FF:000012">
    <property type="entry name" value="tRNA/tmRNA (uracil-C(5))-methyltransferase"/>
    <property type="match status" value="1"/>
</dbReference>
<dbReference type="Gene3D" id="2.40.50.1070">
    <property type="match status" value="1"/>
</dbReference>
<dbReference type="Gene3D" id="3.40.50.150">
    <property type="entry name" value="Vaccinia Virus protein VP39"/>
    <property type="match status" value="1"/>
</dbReference>
<dbReference type="HAMAP" id="MF_01011">
    <property type="entry name" value="RNA_methyltr_TrmA"/>
    <property type="match status" value="1"/>
</dbReference>
<dbReference type="InterPro" id="IPR030390">
    <property type="entry name" value="MeTrfase_TrmA_AS"/>
</dbReference>
<dbReference type="InterPro" id="IPR030391">
    <property type="entry name" value="MeTrfase_TrmA_CS"/>
</dbReference>
<dbReference type="InterPro" id="IPR029063">
    <property type="entry name" value="SAM-dependent_MTases_sf"/>
</dbReference>
<dbReference type="InterPro" id="IPR011869">
    <property type="entry name" value="TrmA_MeTrfase"/>
</dbReference>
<dbReference type="InterPro" id="IPR010280">
    <property type="entry name" value="U5_MeTrfase_fam"/>
</dbReference>
<dbReference type="NCBIfam" id="TIGR02143">
    <property type="entry name" value="trmA_only"/>
    <property type="match status" value="1"/>
</dbReference>
<dbReference type="PANTHER" id="PTHR47790">
    <property type="entry name" value="TRNA/TMRNA (URACIL-C(5))-METHYLTRANSFERASE"/>
    <property type="match status" value="1"/>
</dbReference>
<dbReference type="PANTHER" id="PTHR47790:SF2">
    <property type="entry name" value="TRNA_TMRNA (URACIL-C(5))-METHYLTRANSFERASE"/>
    <property type="match status" value="1"/>
</dbReference>
<dbReference type="Pfam" id="PF05958">
    <property type="entry name" value="tRNA_U5-meth_tr"/>
    <property type="match status" value="1"/>
</dbReference>
<dbReference type="SUPFAM" id="SSF53335">
    <property type="entry name" value="S-adenosyl-L-methionine-dependent methyltransferases"/>
    <property type="match status" value="1"/>
</dbReference>
<dbReference type="PROSITE" id="PS51687">
    <property type="entry name" value="SAM_MT_RNA_M5U"/>
    <property type="match status" value="1"/>
</dbReference>
<dbReference type="PROSITE" id="PS01230">
    <property type="entry name" value="TRMA_1"/>
    <property type="match status" value="1"/>
</dbReference>
<dbReference type="PROSITE" id="PS01231">
    <property type="entry name" value="TRMA_2"/>
    <property type="match status" value="1"/>
</dbReference>
<gene>
    <name evidence="1" type="primary">trmA</name>
    <name type="ordered locus">VCM66_0154</name>
</gene>
<name>TRMA_VIBCM</name>
<comment type="function">
    <text evidence="1">Dual-specificity methyltransferase that catalyzes the formation of 5-methyluridine at position 54 (m5U54) in all tRNAs, and that of position 341 (m5U341) in tmRNA (transfer-mRNA).</text>
</comment>
<comment type="catalytic activity">
    <reaction evidence="1">
        <text>uridine(54) in tRNA + S-adenosyl-L-methionine = 5-methyluridine(54) in tRNA + S-adenosyl-L-homocysteine + H(+)</text>
        <dbReference type="Rhea" id="RHEA:42712"/>
        <dbReference type="Rhea" id="RHEA-COMP:10167"/>
        <dbReference type="Rhea" id="RHEA-COMP:10193"/>
        <dbReference type="ChEBI" id="CHEBI:15378"/>
        <dbReference type="ChEBI" id="CHEBI:57856"/>
        <dbReference type="ChEBI" id="CHEBI:59789"/>
        <dbReference type="ChEBI" id="CHEBI:65315"/>
        <dbReference type="ChEBI" id="CHEBI:74447"/>
        <dbReference type="EC" id="2.1.1.35"/>
    </reaction>
</comment>
<comment type="catalytic activity">
    <reaction evidence="1">
        <text>uridine(341) in tmRNA + S-adenosyl-L-methionine = 5-methyluridine(341) in tmRNA + S-adenosyl-L-homocysteine + H(+)</text>
        <dbReference type="Rhea" id="RHEA:43612"/>
        <dbReference type="Rhea" id="RHEA-COMP:10630"/>
        <dbReference type="Rhea" id="RHEA-COMP:10631"/>
        <dbReference type="ChEBI" id="CHEBI:15378"/>
        <dbReference type="ChEBI" id="CHEBI:57856"/>
        <dbReference type="ChEBI" id="CHEBI:59789"/>
        <dbReference type="ChEBI" id="CHEBI:65315"/>
        <dbReference type="ChEBI" id="CHEBI:74447"/>
    </reaction>
</comment>
<comment type="similarity">
    <text evidence="1">Belongs to the class I-like SAM-binding methyltransferase superfamily. RNA M5U methyltransferase family. TrmA subfamily.</text>
</comment>
<protein>
    <recommendedName>
        <fullName evidence="1">tRNA/tmRNA (uracil-C(5))-methyltransferase</fullName>
        <ecNumber evidence="1">2.1.1.-</ecNumber>
        <ecNumber evidence="1">2.1.1.35</ecNumber>
    </recommendedName>
    <alternativeName>
        <fullName evidence="1">tRNA (uracil(54)-C(5))-methyltransferase</fullName>
    </alternativeName>
    <alternativeName>
        <fullName evidence="1">tRNA(m5U54)-methyltransferase</fullName>
        <shortName evidence="1">RUMT</shortName>
    </alternativeName>
    <alternativeName>
        <fullName evidence="1">tmRNA (uracil(341)-C(5))-methyltransferase</fullName>
    </alternativeName>
</protein>
<feature type="chain" id="PRO_1000148891" description="tRNA/tmRNA (uracil-C(5))-methyltransferase">
    <location>
        <begin position="1"/>
        <end position="369"/>
    </location>
</feature>
<feature type="active site" description="Nucleophile" evidence="1">
    <location>
        <position position="326"/>
    </location>
</feature>
<feature type="active site" description="Proton acceptor" evidence="1">
    <location>
        <position position="360"/>
    </location>
</feature>
<feature type="binding site" evidence="1">
    <location>
        <position position="190"/>
    </location>
    <ligand>
        <name>S-adenosyl-L-methionine</name>
        <dbReference type="ChEBI" id="CHEBI:59789"/>
    </ligand>
</feature>
<feature type="binding site" evidence="1">
    <location>
        <position position="218"/>
    </location>
    <ligand>
        <name>S-adenosyl-L-methionine</name>
        <dbReference type="ChEBI" id="CHEBI:59789"/>
    </ligand>
</feature>
<feature type="binding site" evidence="1">
    <location>
        <position position="223"/>
    </location>
    <ligand>
        <name>S-adenosyl-L-methionine</name>
        <dbReference type="ChEBI" id="CHEBI:59789"/>
    </ligand>
</feature>
<feature type="binding site" evidence="1">
    <location>
        <position position="239"/>
    </location>
    <ligand>
        <name>S-adenosyl-L-methionine</name>
        <dbReference type="ChEBI" id="CHEBI:59789"/>
    </ligand>
</feature>
<feature type="binding site" evidence="1">
    <location>
        <position position="301"/>
    </location>
    <ligand>
        <name>S-adenosyl-L-methionine</name>
        <dbReference type="ChEBI" id="CHEBI:59789"/>
    </ligand>
</feature>
<sequence>MATLDVNPELYQAQLADKIARLKAMFVDYSMPELEVFESPVANYRMRAEFRIWHEGDDMYYIMFNQETREKYRVDQFPAASRLINDLMPLLMDAMKGSPILRHKLFQVDFLSTLSGEILVSLLYHRQLSEEWITAAQALKQRLNDEGFNLNLIGRARKMKVVLDRDYVVENLQVNGQPYVYKQVENSFTQPNAKVAEKMLEWAVDCTQESKGDLLELYCGNGNFSLALAQNFERVLATELAKPSVEAAQFNIAANQIGNVQIIRMSAEEFTQAMEGKREFNRLKDAGVDLQSYRCNTIFVDPPRSGMDIDTCKMVQGYERILYISCNPETLQENLQVLGETHQVVRFALFDQFPYTHHMEAGVMLERKK</sequence>
<accession>C3LPZ5</accession>
<evidence type="ECO:0000255" key="1">
    <source>
        <dbReference type="HAMAP-Rule" id="MF_01011"/>
    </source>
</evidence>
<organism>
    <name type="scientific">Vibrio cholerae serotype O1 (strain M66-2)</name>
    <dbReference type="NCBI Taxonomy" id="579112"/>
    <lineage>
        <taxon>Bacteria</taxon>
        <taxon>Pseudomonadati</taxon>
        <taxon>Pseudomonadota</taxon>
        <taxon>Gammaproteobacteria</taxon>
        <taxon>Vibrionales</taxon>
        <taxon>Vibrionaceae</taxon>
        <taxon>Vibrio</taxon>
    </lineage>
</organism>
<proteinExistence type="inferred from homology"/>
<reference key="1">
    <citation type="journal article" date="2008" name="PLoS ONE">
        <title>A recalibrated molecular clock and independent origins for the cholera pandemic clones.</title>
        <authorList>
            <person name="Feng L."/>
            <person name="Reeves P.R."/>
            <person name="Lan R."/>
            <person name="Ren Y."/>
            <person name="Gao C."/>
            <person name="Zhou Z."/>
            <person name="Ren Y."/>
            <person name="Cheng J."/>
            <person name="Wang W."/>
            <person name="Wang J."/>
            <person name="Qian W."/>
            <person name="Li D."/>
            <person name="Wang L."/>
        </authorList>
    </citation>
    <scope>NUCLEOTIDE SEQUENCE [LARGE SCALE GENOMIC DNA]</scope>
    <source>
        <strain>M66-2</strain>
    </source>
</reference>